<organism>
    <name type="scientific">Danio rerio</name>
    <name type="common">Zebrafish</name>
    <name type="synonym">Brachydanio rerio</name>
    <dbReference type="NCBI Taxonomy" id="7955"/>
    <lineage>
        <taxon>Eukaryota</taxon>
        <taxon>Metazoa</taxon>
        <taxon>Chordata</taxon>
        <taxon>Craniata</taxon>
        <taxon>Vertebrata</taxon>
        <taxon>Euteleostomi</taxon>
        <taxon>Actinopterygii</taxon>
        <taxon>Neopterygii</taxon>
        <taxon>Teleostei</taxon>
        <taxon>Ostariophysi</taxon>
        <taxon>Cypriniformes</taxon>
        <taxon>Danionidae</taxon>
        <taxon>Danioninae</taxon>
        <taxon>Danio</taxon>
    </lineage>
</organism>
<feature type="chain" id="PRO_0000268667" description="Isochorismatase domain-containing protein 1">
    <location>
        <begin position="1"/>
        <end position="283"/>
    </location>
</feature>
<sequence length="283" mass="31325">MADTHSNNNHVPVLFSFSVFSRASSVPVGSGYEVLIQKFLSIYGSQIDVHRKLVLQYFSEEWGQYIDLPKGFTVSEKCRLRLVPLQMDITTLGNLSPATSVFFCCDMQERFRPAIKYFGDIISVGQRLLQGARILGIPVVVSEQYPKGLGSTVQEMDLTGAKLVFPKTKFSMVIPELEAALAEIPGVRSVVLFGVETHVCIQQTALDLIGRGFEVHIVADATSSRSMMDRMFALERLARTGIIITTSESVLLQLVADKEHPKFKEIQNIIKVSAPESGLLSKV</sequence>
<proteinExistence type="evidence at transcript level"/>
<protein>
    <recommendedName>
        <fullName>Isochorismatase domain-containing protein 1</fullName>
    </recommendedName>
</protein>
<keyword id="KW-1185">Reference proteome</keyword>
<gene>
    <name type="primary">isoc1</name>
    <name type="ORF">zgc:153699</name>
</gene>
<name>ISOC1_DANRE</name>
<comment type="similarity">
    <text evidence="1">Belongs to the isochorismatase family.</text>
</comment>
<accession>Q08C33</accession>
<reference key="1">
    <citation type="submission" date="2006-09" db="EMBL/GenBank/DDBJ databases">
        <authorList>
            <consortium name="NIH - Zebrafish Gene Collection (ZGC) project"/>
        </authorList>
    </citation>
    <scope>NUCLEOTIDE SEQUENCE [LARGE SCALE MRNA]</scope>
    <source>
        <tissue>Eye</tissue>
    </source>
</reference>
<evidence type="ECO:0000305" key="1"/>
<dbReference type="EMBL" id="BC124430">
    <property type="protein sequence ID" value="AAI24431.1"/>
    <property type="molecule type" value="mRNA"/>
</dbReference>
<dbReference type="RefSeq" id="NP_001073450.1">
    <property type="nucleotide sequence ID" value="NM_001079981.1"/>
</dbReference>
<dbReference type="SMR" id="Q08C33"/>
<dbReference type="FunCoup" id="Q08C33">
    <property type="interactions" value="1549"/>
</dbReference>
<dbReference type="STRING" id="7955.ENSDARP00000078713"/>
<dbReference type="PaxDb" id="7955-ENSDARP00000110335"/>
<dbReference type="Ensembl" id="ENSDART00000084278">
    <property type="protein sequence ID" value="ENSDARP00000078713"/>
    <property type="gene ID" value="ENSDARG00000060069"/>
</dbReference>
<dbReference type="GeneID" id="559897"/>
<dbReference type="KEGG" id="dre:559897"/>
<dbReference type="AGR" id="ZFIN:ZDB-GENE-061020-1"/>
<dbReference type="CTD" id="51015"/>
<dbReference type="ZFIN" id="ZDB-GENE-061020-1">
    <property type="gene designation" value="isoc1"/>
</dbReference>
<dbReference type="eggNOG" id="KOG4044">
    <property type="taxonomic scope" value="Eukaryota"/>
</dbReference>
<dbReference type="HOGENOM" id="CLU_047255_0_0_1"/>
<dbReference type="InParanoid" id="Q08C33"/>
<dbReference type="OMA" id="QHACANI"/>
<dbReference type="OrthoDB" id="269496at2759"/>
<dbReference type="PhylomeDB" id="Q08C33"/>
<dbReference type="TreeFam" id="TF313459"/>
<dbReference type="PRO" id="PR:Q08C33"/>
<dbReference type="Proteomes" id="UP000000437">
    <property type="component" value="Chromosome 10"/>
</dbReference>
<dbReference type="Bgee" id="ENSDARG00000060069">
    <property type="expression patterns" value="Expressed in mature ovarian follicle and 22 other cell types or tissues"/>
</dbReference>
<dbReference type="GO" id="GO:0005737">
    <property type="term" value="C:cytoplasm"/>
    <property type="evidence" value="ECO:0000318"/>
    <property type="project" value="GO_Central"/>
</dbReference>
<dbReference type="CDD" id="cd01012">
    <property type="entry name" value="YcaC_related"/>
    <property type="match status" value="1"/>
</dbReference>
<dbReference type="FunFam" id="3.40.50.850:FF:000001">
    <property type="entry name" value="Isochorismatase domain-containing protein 1"/>
    <property type="match status" value="1"/>
</dbReference>
<dbReference type="Gene3D" id="3.40.50.850">
    <property type="entry name" value="Isochorismatase-like"/>
    <property type="match status" value="1"/>
</dbReference>
<dbReference type="InterPro" id="IPR000868">
    <property type="entry name" value="Isochorismatase-like_dom"/>
</dbReference>
<dbReference type="InterPro" id="IPR036380">
    <property type="entry name" value="Isochorismatase-like_sf"/>
</dbReference>
<dbReference type="InterPro" id="IPR050993">
    <property type="entry name" value="Isochorismatase_domain"/>
</dbReference>
<dbReference type="PANTHER" id="PTHR14119">
    <property type="entry name" value="HYDROLASE"/>
    <property type="match status" value="1"/>
</dbReference>
<dbReference type="PANTHER" id="PTHR14119:SF17">
    <property type="entry name" value="ISOCHORISMATASE DOMAIN-CONTAINING PROTEIN 1"/>
    <property type="match status" value="1"/>
</dbReference>
<dbReference type="Pfam" id="PF00857">
    <property type="entry name" value="Isochorismatase"/>
    <property type="match status" value="1"/>
</dbReference>
<dbReference type="SUPFAM" id="SSF52499">
    <property type="entry name" value="Isochorismatase-like hydrolases"/>
    <property type="match status" value="1"/>
</dbReference>